<evidence type="ECO:0000255" key="1"/>
<evidence type="ECO:0000269" key="2">
    <source>
    </source>
</evidence>
<evidence type="ECO:0000305" key="3"/>
<evidence type="ECO:0000312" key="4">
    <source>
        <dbReference type="HGNC" id="HGNC:44353"/>
    </source>
</evidence>
<reference key="1">
    <citation type="journal article" date="2006" name="Nature">
        <title>DNA sequence of human chromosome 17 and analysis of rearrangement in the human lineage.</title>
        <authorList>
            <person name="Zody M.C."/>
            <person name="Garber M."/>
            <person name="Adams D.J."/>
            <person name="Sharpe T."/>
            <person name="Harrow J."/>
            <person name="Lupski J.R."/>
            <person name="Nicholson C."/>
            <person name="Searle S.M."/>
            <person name="Wilming L."/>
            <person name="Young S.K."/>
            <person name="Abouelleil A."/>
            <person name="Allen N.R."/>
            <person name="Bi W."/>
            <person name="Bloom T."/>
            <person name="Borowsky M.L."/>
            <person name="Bugalter B.E."/>
            <person name="Butler J."/>
            <person name="Chang J.L."/>
            <person name="Chen C.-K."/>
            <person name="Cook A."/>
            <person name="Corum B."/>
            <person name="Cuomo C.A."/>
            <person name="de Jong P.J."/>
            <person name="DeCaprio D."/>
            <person name="Dewar K."/>
            <person name="FitzGerald M."/>
            <person name="Gilbert J."/>
            <person name="Gibson R."/>
            <person name="Gnerre S."/>
            <person name="Goldstein S."/>
            <person name="Grafham D.V."/>
            <person name="Grocock R."/>
            <person name="Hafez N."/>
            <person name="Hagopian D.S."/>
            <person name="Hart E."/>
            <person name="Norman C.H."/>
            <person name="Humphray S."/>
            <person name="Jaffe D.B."/>
            <person name="Jones M."/>
            <person name="Kamal M."/>
            <person name="Khodiyar V.K."/>
            <person name="LaButti K."/>
            <person name="Laird G."/>
            <person name="Lehoczky J."/>
            <person name="Liu X."/>
            <person name="Lokyitsang T."/>
            <person name="Loveland J."/>
            <person name="Lui A."/>
            <person name="Macdonald P."/>
            <person name="Major J.E."/>
            <person name="Matthews L."/>
            <person name="Mauceli E."/>
            <person name="McCarroll S.A."/>
            <person name="Mihalev A.H."/>
            <person name="Mudge J."/>
            <person name="Nguyen C."/>
            <person name="Nicol R."/>
            <person name="O'Leary S.B."/>
            <person name="Osoegawa K."/>
            <person name="Schwartz D.C."/>
            <person name="Shaw-Smith C."/>
            <person name="Stankiewicz P."/>
            <person name="Steward C."/>
            <person name="Swarbreck D."/>
            <person name="Venkataraman V."/>
            <person name="Whittaker C.A."/>
            <person name="Yang X."/>
            <person name="Zimmer A.R."/>
            <person name="Bradley A."/>
            <person name="Hubbard T."/>
            <person name="Birren B.W."/>
            <person name="Rogers J."/>
            <person name="Lander E.S."/>
            <person name="Nusbaum C."/>
        </authorList>
    </citation>
    <scope>NUCLEOTIDE SEQUENCE [LARGE SCALE GENOMIC DNA]</scope>
</reference>
<reference key="2">
    <citation type="journal article" date="2019" name="Theranostics">
        <title>Spontaneous evolution of human skin fibroblasts into wound-healing keratinocyte-like cells.</title>
        <authorList>
            <person name="Zhang F."/>
            <person name="Zhang D."/>
            <person name="Cheng K."/>
            <person name="Zhou Z."/>
            <person name="Liu S."/>
            <person name="Chen L."/>
            <person name="Hu Y."/>
            <person name="Mao C."/>
            <person name="Liu S."/>
        </authorList>
    </citation>
    <scope>FUNCTION</scope>
</reference>
<protein>
    <recommendedName>
        <fullName evidence="3">LASP1 neighbor protein</fullName>
    </recommendedName>
    <alternativeName>
        <fullName>Long intergenic non-protein coding RNA 672</fullName>
    </alternativeName>
</protein>
<dbReference type="EMBL" id="AC006441">
    <property type="status" value="NOT_ANNOTATED_CDS"/>
    <property type="molecule type" value="Genomic_DNA"/>
</dbReference>
<dbReference type="RefSeq" id="NP_001401626.1">
    <property type="nucleotide sequence ID" value="NM_001414697.1"/>
</dbReference>
<dbReference type="BioMuta" id="LINC00672"/>
<dbReference type="Ensembl" id="ENST00000583195.3">
    <property type="protein sequence ID" value="ENSP00000490930.1"/>
    <property type="gene ID" value="ENSG00000263874.3"/>
</dbReference>
<dbReference type="GeneID" id="100505576"/>
<dbReference type="MANE-Select" id="ENST00000583195.3">
    <property type="protein sequence ID" value="ENSP00000490930.1"/>
    <property type="RefSeq nucleotide sequence ID" value="NM_001414697.1"/>
    <property type="RefSeq protein sequence ID" value="NP_001401626.1"/>
</dbReference>
<dbReference type="AGR" id="HGNC:44353"/>
<dbReference type="GeneCards" id="LASP1NB"/>
<dbReference type="HGNC" id="HGNC:44353">
    <property type="gene designation" value="LASP1NB"/>
</dbReference>
<dbReference type="MIM" id="617544">
    <property type="type" value="gene"/>
</dbReference>
<dbReference type="OpenTargets" id="ENSG00000263874"/>
<dbReference type="VEuPathDB" id="HostDB:ENSG00000263874"/>
<dbReference type="GeneTree" id="ENSGT00950000183492"/>
<dbReference type="InParanoid" id="A0A1B0GWH6"/>
<dbReference type="PAN-GO" id="A0A1B0GWH6">
    <property type="GO annotations" value="0 GO annotations based on evolutionary models"/>
</dbReference>
<dbReference type="ChiTaRS" id="LINC00672">
    <property type="organism name" value="human"/>
</dbReference>
<dbReference type="PRO" id="PR:A0A1B0GWH6"/>
<dbReference type="Proteomes" id="UP000005640">
    <property type="component" value="Chromosome 17"/>
</dbReference>
<dbReference type="Bgee" id="ENSG00000263874">
    <property type="expression patterns" value="Expressed in pancreatic ductal cell and 131 other cell types or tissues"/>
</dbReference>
<dbReference type="GO" id="GO:0016020">
    <property type="term" value="C:membrane"/>
    <property type="evidence" value="ECO:0007669"/>
    <property type="project" value="UniProtKB-SubCell"/>
</dbReference>
<proteinExistence type="inferred from homology"/>
<keyword id="KW-0472">Membrane</keyword>
<keyword id="KW-1185">Reference proteome</keyword>
<keyword id="KW-0812">Transmembrane</keyword>
<keyword id="KW-1133">Transmembrane helix</keyword>
<accession>A0A1B0GWH6</accession>
<comment type="function">
    <text evidence="2">May play a key role in the skin fibroblasts (FBs)-keratinocyte-like cells (KLCs).</text>
</comment>
<comment type="subcellular location">
    <subcellularLocation>
        <location evidence="1">Membrane</location>
        <topology evidence="1">Single-pass membrane protein</topology>
    </subcellularLocation>
</comment>
<name>LSP1N_HUMAN</name>
<gene>
    <name evidence="4" type="primary">LASP1NB</name>
    <name type="synonym">LINC00672</name>
</gene>
<organism>
    <name type="scientific">Homo sapiens</name>
    <name type="common">Human</name>
    <dbReference type="NCBI Taxonomy" id="9606"/>
    <lineage>
        <taxon>Eukaryota</taxon>
        <taxon>Metazoa</taxon>
        <taxon>Chordata</taxon>
        <taxon>Craniata</taxon>
        <taxon>Vertebrata</taxon>
        <taxon>Euteleostomi</taxon>
        <taxon>Mammalia</taxon>
        <taxon>Eutheria</taxon>
        <taxon>Euarchontoglires</taxon>
        <taxon>Primates</taxon>
        <taxon>Haplorrhini</taxon>
        <taxon>Catarrhini</taxon>
        <taxon>Hominidae</taxon>
        <taxon>Homo</taxon>
    </lineage>
</organism>
<sequence>MLDIFILMFFAIIGLVILSYIIYLL</sequence>
<feature type="chain" id="PRO_0000458007" description="LASP1 neighbor protein">
    <location>
        <begin position="1"/>
        <end position="25"/>
    </location>
</feature>
<feature type="transmembrane region" description="Helical" evidence="1">
    <location>
        <begin position="4"/>
        <end position="24"/>
    </location>
</feature>